<name>PNP_SHIF8</name>
<gene>
    <name evidence="1" type="primary">pnp</name>
    <name type="ordered locus">SFV_3194</name>
</gene>
<evidence type="ECO:0000255" key="1">
    <source>
        <dbReference type="HAMAP-Rule" id="MF_01595"/>
    </source>
</evidence>
<evidence type="ECO:0000256" key="2">
    <source>
        <dbReference type="SAM" id="MobiDB-lite"/>
    </source>
</evidence>
<organism>
    <name type="scientific">Shigella flexneri serotype 5b (strain 8401)</name>
    <dbReference type="NCBI Taxonomy" id="373384"/>
    <lineage>
        <taxon>Bacteria</taxon>
        <taxon>Pseudomonadati</taxon>
        <taxon>Pseudomonadota</taxon>
        <taxon>Gammaproteobacteria</taxon>
        <taxon>Enterobacterales</taxon>
        <taxon>Enterobacteriaceae</taxon>
        <taxon>Shigella</taxon>
    </lineage>
</organism>
<dbReference type="EC" id="2.7.7.8" evidence="1"/>
<dbReference type="EMBL" id="CP000266">
    <property type="protein sequence ID" value="ABF05248.1"/>
    <property type="molecule type" value="Genomic_DNA"/>
</dbReference>
<dbReference type="RefSeq" id="WP_001297425.1">
    <property type="nucleotide sequence ID" value="NC_008258.1"/>
</dbReference>
<dbReference type="SMR" id="Q0T0B7"/>
<dbReference type="KEGG" id="sfv:SFV_3194"/>
<dbReference type="HOGENOM" id="CLU_004217_2_2_6"/>
<dbReference type="Proteomes" id="UP000000659">
    <property type="component" value="Chromosome"/>
</dbReference>
<dbReference type="GO" id="GO:0005829">
    <property type="term" value="C:cytosol"/>
    <property type="evidence" value="ECO:0007669"/>
    <property type="project" value="TreeGrafter"/>
</dbReference>
<dbReference type="GO" id="GO:0000175">
    <property type="term" value="F:3'-5'-RNA exonuclease activity"/>
    <property type="evidence" value="ECO:0007669"/>
    <property type="project" value="TreeGrafter"/>
</dbReference>
<dbReference type="GO" id="GO:0000287">
    <property type="term" value="F:magnesium ion binding"/>
    <property type="evidence" value="ECO:0007669"/>
    <property type="project" value="UniProtKB-UniRule"/>
</dbReference>
<dbReference type="GO" id="GO:0004654">
    <property type="term" value="F:polyribonucleotide nucleotidyltransferase activity"/>
    <property type="evidence" value="ECO:0007669"/>
    <property type="project" value="UniProtKB-UniRule"/>
</dbReference>
<dbReference type="GO" id="GO:0003723">
    <property type="term" value="F:RNA binding"/>
    <property type="evidence" value="ECO:0007669"/>
    <property type="project" value="UniProtKB-UniRule"/>
</dbReference>
<dbReference type="GO" id="GO:0006402">
    <property type="term" value="P:mRNA catabolic process"/>
    <property type="evidence" value="ECO:0007669"/>
    <property type="project" value="UniProtKB-UniRule"/>
</dbReference>
<dbReference type="GO" id="GO:0006396">
    <property type="term" value="P:RNA processing"/>
    <property type="evidence" value="ECO:0007669"/>
    <property type="project" value="InterPro"/>
</dbReference>
<dbReference type="CDD" id="cd02393">
    <property type="entry name" value="KH-I_PNPase"/>
    <property type="match status" value="1"/>
</dbReference>
<dbReference type="CDD" id="cd11363">
    <property type="entry name" value="RNase_PH_PNPase_1"/>
    <property type="match status" value="1"/>
</dbReference>
<dbReference type="CDD" id="cd11364">
    <property type="entry name" value="RNase_PH_PNPase_2"/>
    <property type="match status" value="1"/>
</dbReference>
<dbReference type="CDD" id="cd04472">
    <property type="entry name" value="S1_PNPase"/>
    <property type="match status" value="1"/>
</dbReference>
<dbReference type="FunFam" id="2.40.50.140:FF:000023">
    <property type="entry name" value="Polyribonucleotide nucleotidyltransferase"/>
    <property type="match status" value="1"/>
</dbReference>
<dbReference type="FunFam" id="3.30.1370.10:FF:000001">
    <property type="entry name" value="Polyribonucleotide nucleotidyltransferase"/>
    <property type="match status" value="1"/>
</dbReference>
<dbReference type="FunFam" id="3.30.230.70:FF:000001">
    <property type="entry name" value="Polyribonucleotide nucleotidyltransferase"/>
    <property type="match status" value="1"/>
</dbReference>
<dbReference type="FunFam" id="3.30.230.70:FF:000002">
    <property type="entry name" value="Polyribonucleotide nucleotidyltransferase"/>
    <property type="match status" value="1"/>
</dbReference>
<dbReference type="Gene3D" id="3.30.230.70">
    <property type="entry name" value="GHMP Kinase, N-terminal domain"/>
    <property type="match status" value="2"/>
</dbReference>
<dbReference type="Gene3D" id="3.30.1370.10">
    <property type="entry name" value="K Homology domain, type 1"/>
    <property type="match status" value="1"/>
</dbReference>
<dbReference type="Gene3D" id="2.40.50.140">
    <property type="entry name" value="Nucleic acid-binding proteins"/>
    <property type="match status" value="1"/>
</dbReference>
<dbReference type="HAMAP" id="MF_01595">
    <property type="entry name" value="PNPase"/>
    <property type="match status" value="1"/>
</dbReference>
<dbReference type="InterPro" id="IPR001247">
    <property type="entry name" value="ExoRNase_PH_dom1"/>
</dbReference>
<dbReference type="InterPro" id="IPR015847">
    <property type="entry name" value="ExoRNase_PH_dom2"/>
</dbReference>
<dbReference type="InterPro" id="IPR036345">
    <property type="entry name" value="ExoRNase_PH_dom2_sf"/>
</dbReference>
<dbReference type="InterPro" id="IPR004087">
    <property type="entry name" value="KH_dom"/>
</dbReference>
<dbReference type="InterPro" id="IPR004088">
    <property type="entry name" value="KH_dom_type_1"/>
</dbReference>
<dbReference type="InterPro" id="IPR036612">
    <property type="entry name" value="KH_dom_type_1_sf"/>
</dbReference>
<dbReference type="InterPro" id="IPR012340">
    <property type="entry name" value="NA-bd_OB-fold"/>
</dbReference>
<dbReference type="InterPro" id="IPR012162">
    <property type="entry name" value="PNPase"/>
</dbReference>
<dbReference type="InterPro" id="IPR027408">
    <property type="entry name" value="PNPase/RNase_PH_dom_sf"/>
</dbReference>
<dbReference type="InterPro" id="IPR015848">
    <property type="entry name" value="PNPase_PH_RNA-bd_bac/org-type"/>
</dbReference>
<dbReference type="InterPro" id="IPR036456">
    <property type="entry name" value="PNPase_PH_RNA-bd_sf"/>
</dbReference>
<dbReference type="InterPro" id="IPR020568">
    <property type="entry name" value="Ribosomal_Su5_D2-typ_SF"/>
</dbReference>
<dbReference type="InterPro" id="IPR003029">
    <property type="entry name" value="S1_domain"/>
</dbReference>
<dbReference type="NCBIfam" id="TIGR03591">
    <property type="entry name" value="polynuc_phos"/>
    <property type="match status" value="1"/>
</dbReference>
<dbReference type="NCBIfam" id="NF008805">
    <property type="entry name" value="PRK11824.1"/>
    <property type="match status" value="1"/>
</dbReference>
<dbReference type="PANTHER" id="PTHR11252">
    <property type="entry name" value="POLYRIBONUCLEOTIDE NUCLEOTIDYLTRANSFERASE"/>
    <property type="match status" value="1"/>
</dbReference>
<dbReference type="PANTHER" id="PTHR11252:SF0">
    <property type="entry name" value="POLYRIBONUCLEOTIDE NUCLEOTIDYLTRANSFERASE 1, MITOCHONDRIAL"/>
    <property type="match status" value="1"/>
</dbReference>
<dbReference type="Pfam" id="PF00013">
    <property type="entry name" value="KH_1"/>
    <property type="match status" value="1"/>
</dbReference>
<dbReference type="Pfam" id="PF03726">
    <property type="entry name" value="PNPase"/>
    <property type="match status" value="1"/>
</dbReference>
<dbReference type="Pfam" id="PF01138">
    <property type="entry name" value="RNase_PH"/>
    <property type="match status" value="2"/>
</dbReference>
<dbReference type="Pfam" id="PF03725">
    <property type="entry name" value="RNase_PH_C"/>
    <property type="match status" value="2"/>
</dbReference>
<dbReference type="Pfam" id="PF00575">
    <property type="entry name" value="S1"/>
    <property type="match status" value="1"/>
</dbReference>
<dbReference type="PIRSF" id="PIRSF005499">
    <property type="entry name" value="PNPase"/>
    <property type="match status" value="1"/>
</dbReference>
<dbReference type="SMART" id="SM00322">
    <property type="entry name" value="KH"/>
    <property type="match status" value="1"/>
</dbReference>
<dbReference type="SMART" id="SM00316">
    <property type="entry name" value="S1"/>
    <property type="match status" value="1"/>
</dbReference>
<dbReference type="SUPFAM" id="SSF54791">
    <property type="entry name" value="Eukaryotic type KH-domain (KH-domain type I)"/>
    <property type="match status" value="1"/>
</dbReference>
<dbReference type="SUPFAM" id="SSF50249">
    <property type="entry name" value="Nucleic acid-binding proteins"/>
    <property type="match status" value="1"/>
</dbReference>
<dbReference type="SUPFAM" id="SSF46915">
    <property type="entry name" value="Polynucleotide phosphorylase/guanosine pentaphosphate synthase (PNPase/GPSI), domain 3"/>
    <property type="match status" value="1"/>
</dbReference>
<dbReference type="SUPFAM" id="SSF55666">
    <property type="entry name" value="Ribonuclease PH domain 2-like"/>
    <property type="match status" value="2"/>
</dbReference>
<dbReference type="SUPFAM" id="SSF54211">
    <property type="entry name" value="Ribosomal protein S5 domain 2-like"/>
    <property type="match status" value="2"/>
</dbReference>
<dbReference type="PROSITE" id="PS50084">
    <property type="entry name" value="KH_TYPE_1"/>
    <property type="match status" value="1"/>
</dbReference>
<dbReference type="PROSITE" id="PS50126">
    <property type="entry name" value="S1"/>
    <property type="match status" value="1"/>
</dbReference>
<feature type="chain" id="PRO_0000329851" description="Polyribonucleotide nucleotidyltransferase">
    <location>
        <begin position="1"/>
        <end position="711"/>
    </location>
</feature>
<feature type="domain" description="KH" evidence="1">
    <location>
        <begin position="553"/>
        <end position="612"/>
    </location>
</feature>
<feature type="domain" description="S1 motif" evidence="1">
    <location>
        <begin position="622"/>
        <end position="690"/>
    </location>
</feature>
<feature type="region of interest" description="Disordered" evidence="2">
    <location>
        <begin position="689"/>
        <end position="711"/>
    </location>
</feature>
<feature type="compositionally biased region" description="Low complexity" evidence="2">
    <location>
        <begin position="694"/>
        <end position="711"/>
    </location>
</feature>
<feature type="binding site" evidence="1">
    <location>
        <position position="486"/>
    </location>
    <ligand>
        <name>Mg(2+)</name>
        <dbReference type="ChEBI" id="CHEBI:18420"/>
    </ligand>
</feature>
<feature type="binding site" evidence="1">
    <location>
        <position position="492"/>
    </location>
    <ligand>
        <name>Mg(2+)</name>
        <dbReference type="ChEBI" id="CHEBI:18420"/>
    </ligand>
</feature>
<accession>Q0T0B7</accession>
<reference key="1">
    <citation type="journal article" date="2006" name="BMC Genomics">
        <title>Complete genome sequence of Shigella flexneri 5b and comparison with Shigella flexneri 2a.</title>
        <authorList>
            <person name="Nie H."/>
            <person name="Yang F."/>
            <person name="Zhang X."/>
            <person name="Yang J."/>
            <person name="Chen L."/>
            <person name="Wang J."/>
            <person name="Xiong Z."/>
            <person name="Peng J."/>
            <person name="Sun L."/>
            <person name="Dong J."/>
            <person name="Xue Y."/>
            <person name="Xu X."/>
            <person name="Chen S."/>
            <person name="Yao Z."/>
            <person name="Shen Y."/>
            <person name="Jin Q."/>
        </authorList>
    </citation>
    <scope>NUCLEOTIDE SEQUENCE [LARGE SCALE GENOMIC DNA]</scope>
    <source>
        <strain>8401</strain>
    </source>
</reference>
<comment type="function">
    <text evidence="1">Involved in mRNA degradation. Catalyzes the phosphorolysis of single-stranded polyribonucleotides processively in the 3'- to 5'-direction.</text>
</comment>
<comment type="catalytic activity">
    <reaction evidence="1">
        <text>RNA(n+1) + phosphate = RNA(n) + a ribonucleoside 5'-diphosphate</text>
        <dbReference type="Rhea" id="RHEA:22096"/>
        <dbReference type="Rhea" id="RHEA-COMP:14527"/>
        <dbReference type="Rhea" id="RHEA-COMP:17342"/>
        <dbReference type="ChEBI" id="CHEBI:43474"/>
        <dbReference type="ChEBI" id="CHEBI:57930"/>
        <dbReference type="ChEBI" id="CHEBI:140395"/>
        <dbReference type="EC" id="2.7.7.8"/>
    </reaction>
</comment>
<comment type="cofactor">
    <cofactor evidence="1">
        <name>Mg(2+)</name>
        <dbReference type="ChEBI" id="CHEBI:18420"/>
    </cofactor>
</comment>
<comment type="subunit">
    <text evidence="1">Component of the RNA degradosome, which is a multiprotein complex involved in RNA processing and mRNA degradation.</text>
</comment>
<comment type="subcellular location">
    <subcellularLocation>
        <location evidence="1">Cytoplasm</location>
    </subcellularLocation>
</comment>
<comment type="similarity">
    <text evidence="1">Belongs to the polyribonucleotide nucleotidyltransferase family.</text>
</comment>
<keyword id="KW-0963">Cytoplasm</keyword>
<keyword id="KW-0460">Magnesium</keyword>
<keyword id="KW-0479">Metal-binding</keyword>
<keyword id="KW-0548">Nucleotidyltransferase</keyword>
<keyword id="KW-0694">RNA-binding</keyword>
<keyword id="KW-0808">Transferase</keyword>
<proteinExistence type="inferred from homology"/>
<protein>
    <recommendedName>
        <fullName evidence="1">Polyribonucleotide nucleotidyltransferase</fullName>
        <ecNumber evidence="1">2.7.7.8</ecNumber>
    </recommendedName>
    <alternativeName>
        <fullName evidence="1">Polynucleotide phosphorylase</fullName>
        <shortName evidence="1">PNPase</shortName>
    </alternativeName>
</protein>
<sequence length="711" mass="77116">MLNPIVRKFQYGQHTVTLETGMMARQATAAVMVSMDDTAVFVTVVGQKKAKPGQDFFPLTVNYQERTYAAGRIPGSFFRREGRPSEGETLIARLIDRPIRPLFPEGFVNEVQVIATVVSVNPQVNPDIVAMIGASAALSLSGIPFNGPIGAARVGYINDQYVLNPTQDELKESKLDLVVAGTEAAVLMVESEAELLSEDQMLGAVVFGHEQQQVVIQNINELVKEAGKPRWDWQPEPVNEALNARVAALAEARLSDAYRITDKQERYAQVDVIKSETIATLLAEDETLDENELGEILHAIEKNVVRSRVLAGEPRIDGREKDMIRGLDVRTGVLPRTHGSALFTRGETQALVTATLGTARDAQVLDELMGERTDTFLFHYNFPPYSVGETGMVGSPKRREIGHGRLAKRGVLAVMPDMDKFPYTVRVVSEITESNGSSSMASVCGASLALMDAGVPIKAAVAGIAMGLVKEGDNYVVLSDILGDEDHLGDMDFKVAGSREGISALQMDIKIEGITKEIMQVALNQAKGARLHILGVMEQAINAPRGDISEFAPRIHTIKINPDKIKDVIGKGGSVIRALTEETGTTIEIEDDGTVKIAATDGEKAKHAIRRIEEITAEIEVGRVYTGKVTRIVDFGAFVAIGGGKEGLVHISQIADKRVEKVTDYLQMGQEVPVKVLEVDRQGRIRLSIKEATEQSQPAAAPEAPAAEQGE</sequence>